<evidence type="ECO:0000255" key="1">
    <source>
        <dbReference type="HAMAP-Rule" id="MF_01360"/>
    </source>
</evidence>
<comment type="similarity">
    <text evidence="1">Belongs to the UPF0367 family.</text>
</comment>
<feature type="chain" id="PRO_0000240497" description="UPF0367 protein PMM0124">
    <location>
        <begin position="1"/>
        <end position="89"/>
    </location>
</feature>
<name>Y124_PROMP</name>
<protein>
    <recommendedName>
        <fullName evidence="1">UPF0367 protein PMM0124</fullName>
    </recommendedName>
</protein>
<reference key="1">
    <citation type="journal article" date="2003" name="Nature">
        <title>Genome divergence in two Prochlorococcus ecotypes reflects oceanic niche differentiation.</title>
        <authorList>
            <person name="Rocap G."/>
            <person name="Larimer F.W."/>
            <person name="Lamerdin J.E."/>
            <person name="Malfatti S."/>
            <person name="Chain P."/>
            <person name="Ahlgren N.A."/>
            <person name="Arellano A."/>
            <person name="Coleman M."/>
            <person name="Hauser L."/>
            <person name="Hess W.R."/>
            <person name="Johnson Z.I."/>
            <person name="Land M.L."/>
            <person name="Lindell D."/>
            <person name="Post A.F."/>
            <person name="Regala W."/>
            <person name="Shah M."/>
            <person name="Shaw S.L."/>
            <person name="Steglich C."/>
            <person name="Sullivan M.B."/>
            <person name="Ting C.S."/>
            <person name="Tolonen A."/>
            <person name="Webb E.A."/>
            <person name="Zinser E.R."/>
            <person name="Chisholm S.W."/>
        </authorList>
    </citation>
    <scope>NUCLEOTIDE SEQUENCE [LARGE SCALE GENOMIC DNA]</scope>
    <source>
        <strain>CCMP1986 / NIES-2087 / MED4</strain>
    </source>
</reference>
<organism>
    <name type="scientific">Prochlorococcus marinus subsp. pastoris (strain CCMP1986 / NIES-2087 / MED4)</name>
    <dbReference type="NCBI Taxonomy" id="59919"/>
    <lineage>
        <taxon>Bacteria</taxon>
        <taxon>Bacillati</taxon>
        <taxon>Cyanobacteriota</taxon>
        <taxon>Cyanophyceae</taxon>
        <taxon>Synechococcales</taxon>
        <taxon>Prochlorococcaceae</taxon>
        <taxon>Prochlorococcus</taxon>
    </lineage>
</organism>
<dbReference type="EMBL" id="BX548174">
    <property type="protein sequence ID" value="CAE18583.1"/>
    <property type="molecule type" value="Genomic_DNA"/>
</dbReference>
<dbReference type="RefSeq" id="WP_011131763.1">
    <property type="nucleotide sequence ID" value="NC_005072.1"/>
</dbReference>
<dbReference type="STRING" id="59919.PMM0124"/>
<dbReference type="KEGG" id="pmm:PMM0124"/>
<dbReference type="eggNOG" id="ENOG5032YB3">
    <property type="taxonomic scope" value="Bacteria"/>
</dbReference>
<dbReference type="HOGENOM" id="CLU_180777_1_0_3"/>
<dbReference type="OrthoDB" id="516864at2"/>
<dbReference type="Proteomes" id="UP000001026">
    <property type="component" value="Chromosome"/>
</dbReference>
<dbReference type="HAMAP" id="MF_01360">
    <property type="entry name" value="UPF0367"/>
    <property type="match status" value="1"/>
</dbReference>
<dbReference type="InterPro" id="IPR020885">
    <property type="entry name" value="UPF0367"/>
</dbReference>
<dbReference type="NCBIfam" id="NF010236">
    <property type="entry name" value="PRK13683.1"/>
    <property type="match status" value="1"/>
</dbReference>
<accession>Q7V3F1</accession>
<gene>
    <name type="ordered locus">PMM0124</name>
</gene>
<proteinExistence type="inferred from homology"/>
<sequence>MYSLEISLRYSPFPLSIQKKEYEDIKRIYDEIKDSMNSDNQNSPLIELSCEKVQDKLITVLAKEVISVQIYEKSAVAGGSKRPGFSLDI</sequence>